<sequence length="236" mass="26875">MVCDTLVYHPSVTRFVKFLDGSAGREKVLRLLQYLARFLAVQNSSLLARQLQAQFTTVRKFLRFLKPLNHLQAAAKFYDNKLASDNVVRVCNVLKNIFFAAYLSLDQVNLLRILKVIPVTVLTGKKIPRWSNWCWLFGLLSGLAMDLRKIQTSHAQIAAFVKAKSQSQGDEHEDHKKVLGKAYQDRYTALRRLFWDAADSFIVLNNLGYLSSNEEYVALSGVVTSILGMQDMWKAT</sequence>
<accession>Q12462</accession>
<accession>D6W1S2</accession>
<feature type="initiator methionine" description="Removed" evidence="6 7">
    <location>
        <position position="1"/>
    </location>
</feature>
<feature type="chain" id="PRO_0000105974" description="Peroxisomal membrane protein PMP27">
    <location>
        <begin position="2"/>
        <end position="236"/>
    </location>
</feature>
<evidence type="ECO:0000269" key="1">
    <source>
    </source>
</evidence>
<evidence type="ECO:0000269" key="2">
    <source>
    </source>
</evidence>
<evidence type="ECO:0000269" key="3">
    <source>
    </source>
</evidence>
<evidence type="ECO:0000269" key="4">
    <source>
    </source>
</evidence>
<evidence type="ECO:0000269" key="5">
    <source>
    </source>
</evidence>
<evidence type="ECO:0000269" key="6">
    <source>
    </source>
</evidence>
<evidence type="ECO:0000269" key="7">
    <source>
    </source>
</evidence>
<evidence type="ECO:0000305" key="8"/>
<name>PEX11_YEAST</name>
<protein>
    <recommendedName>
        <fullName>Peroxisomal membrane protein PMP27</fullName>
    </recommendedName>
    <alternativeName>
        <fullName>Peroxin-11</fullName>
    </alternativeName>
</protein>
<organism>
    <name type="scientific">Saccharomyces cerevisiae (strain ATCC 204508 / S288c)</name>
    <name type="common">Baker's yeast</name>
    <dbReference type="NCBI Taxonomy" id="559292"/>
    <lineage>
        <taxon>Eukaryota</taxon>
        <taxon>Fungi</taxon>
        <taxon>Dikarya</taxon>
        <taxon>Ascomycota</taxon>
        <taxon>Saccharomycotina</taxon>
        <taxon>Saccharomycetes</taxon>
        <taxon>Saccharomycetales</taxon>
        <taxon>Saccharomycetaceae</taxon>
        <taxon>Saccharomyces</taxon>
    </lineage>
</organism>
<keyword id="KW-0903">Direct protein sequencing</keyword>
<keyword id="KW-0472">Membrane</keyword>
<keyword id="KW-0576">Peroxisome</keyword>
<keyword id="KW-0962">Peroxisome biogenesis</keyword>
<keyword id="KW-1185">Reference proteome</keyword>
<proteinExistence type="evidence at protein level"/>
<gene>
    <name type="primary">PEX11</name>
    <name type="synonym">PMP24</name>
    <name type="synonym">PMP27</name>
    <name type="ordered locus">YOL147C</name>
    <name type="ORF">O0454</name>
</gene>
<dbReference type="EMBL" id="Z48239">
    <property type="protein sequence ID" value="CAA88280.1"/>
    <property type="molecule type" value="Genomic_DNA"/>
</dbReference>
<dbReference type="EMBL" id="Z74889">
    <property type="protein sequence ID" value="CAA99168.1"/>
    <property type="molecule type" value="Genomic_DNA"/>
</dbReference>
<dbReference type="EMBL" id="X81465">
    <property type="protein sequence ID" value="CAA57223.1"/>
    <property type="molecule type" value="Genomic_DNA"/>
</dbReference>
<dbReference type="EMBL" id="Z46846">
    <property type="protein sequence ID" value="CAA86903.1"/>
    <property type="molecule type" value="Genomic_DNA"/>
</dbReference>
<dbReference type="EMBL" id="AY558010">
    <property type="protein sequence ID" value="AAS56336.1"/>
    <property type="molecule type" value="Genomic_DNA"/>
</dbReference>
<dbReference type="EMBL" id="BK006948">
    <property type="protein sequence ID" value="DAA10638.1"/>
    <property type="molecule type" value="Genomic_DNA"/>
</dbReference>
<dbReference type="PIR" id="A56509">
    <property type="entry name" value="A56509"/>
</dbReference>
<dbReference type="RefSeq" id="NP_014494.1">
    <property type="nucleotide sequence ID" value="NM_001183401.1"/>
</dbReference>
<dbReference type="BioGRID" id="34270">
    <property type="interactions" value="95"/>
</dbReference>
<dbReference type="DIP" id="DIP-3839N"/>
<dbReference type="FunCoup" id="Q12462">
    <property type="interactions" value="343"/>
</dbReference>
<dbReference type="IntAct" id="Q12462">
    <property type="interactions" value="31"/>
</dbReference>
<dbReference type="MINT" id="Q12462"/>
<dbReference type="STRING" id="4932.YOL147C"/>
<dbReference type="TCDB" id="1.A.101.1.1">
    <property type="family name" value="the peroxisomal pore-forming pex11 (pex11) family"/>
</dbReference>
<dbReference type="TCDB" id="3.A.20.1.5">
    <property type="family name" value="the peroxisomal protein importer (ppi) family"/>
</dbReference>
<dbReference type="iPTMnet" id="Q12462"/>
<dbReference type="PaxDb" id="4932-YOL147C"/>
<dbReference type="PeptideAtlas" id="Q12462"/>
<dbReference type="EnsemblFungi" id="YOL147C_mRNA">
    <property type="protein sequence ID" value="YOL147C"/>
    <property type="gene ID" value="YOL147C"/>
</dbReference>
<dbReference type="GeneID" id="854018"/>
<dbReference type="KEGG" id="sce:YOL147C"/>
<dbReference type="AGR" id="SGD:S000005507"/>
<dbReference type="SGD" id="S000005507">
    <property type="gene designation" value="PEX11"/>
</dbReference>
<dbReference type="VEuPathDB" id="FungiDB:YOL147C"/>
<dbReference type="eggNOG" id="KOG4186">
    <property type="taxonomic scope" value="Eukaryota"/>
</dbReference>
<dbReference type="GeneTree" id="ENSGT00390000014273"/>
<dbReference type="HOGENOM" id="CLU_049216_0_1_1"/>
<dbReference type="InParanoid" id="Q12462"/>
<dbReference type="OMA" id="AYHPTVA"/>
<dbReference type="OrthoDB" id="411017at2759"/>
<dbReference type="BioCyc" id="YEAST:G3O-33537-MONOMER"/>
<dbReference type="Reactome" id="R-SCE-9603798">
    <property type="pathway name" value="Class I peroxisomal membrane protein import"/>
</dbReference>
<dbReference type="BioGRID-ORCS" id="854018">
    <property type="hits" value="0 hits in 10 CRISPR screens"/>
</dbReference>
<dbReference type="PRO" id="PR:Q12462"/>
<dbReference type="Proteomes" id="UP000002311">
    <property type="component" value="Chromosome XV"/>
</dbReference>
<dbReference type="RNAct" id="Q12462">
    <property type="molecule type" value="protein"/>
</dbReference>
<dbReference type="GO" id="GO:0005783">
    <property type="term" value="C:endoplasmic reticulum"/>
    <property type="evidence" value="ECO:0000314"/>
    <property type="project" value="SGD"/>
</dbReference>
<dbReference type="GO" id="GO:1990429">
    <property type="term" value="C:peroxisomal importomer complex"/>
    <property type="evidence" value="ECO:0000314"/>
    <property type="project" value="SGD"/>
</dbReference>
<dbReference type="GO" id="GO:0005778">
    <property type="term" value="C:peroxisomal membrane"/>
    <property type="evidence" value="ECO:0000314"/>
    <property type="project" value="SGD"/>
</dbReference>
<dbReference type="GO" id="GO:0005777">
    <property type="term" value="C:peroxisome"/>
    <property type="evidence" value="ECO:0000314"/>
    <property type="project" value="UniProtKB"/>
</dbReference>
<dbReference type="GO" id="GO:0001579">
    <property type="term" value="P:medium-chain fatty acid transport"/>
    <property type="evidence" value="ECO:0000315"/>
    <property type="project" value="SGD"/>
</dbReference>
<dbReference type="GO" id="GO:0016559">
    <property type="term" value="P:peroxisome fission"/>
    <property type="evidence" value="ECO:0000314"/>
    <property type="project" value="UniProtKB"/>
</dbReference>
<dbReference type="GO" id="GO:0007031">
    <property type="term" value="P:peroxisome organization"/>
    <property type="evidence" value="ECO:0000250"/>
    <property type="project" value="UniProtKB"/>
</dbReference>
<dbReference type="GO" id="GO:0044375">
    <property type="term" value="P:regulation of peroxisome size"/>
    <property type="evidence" value="ECO:0000314"/>
    <property type="project" value="UniProtKB"/>
</dbReference>
<dbReference type="GO" id="GO:0007165">
    <property type="term" value="P:signal transduction"/>
    <property type="evidence" value="ECO:0000250"/>
    <property type="project" value="UniProtKB"/>
</dbReference>
<dbReference type="InterPro" id="IPR008733">
    <property type="entry name" value="PEX11"/>
</dbReference>
<dbReference type="PANTHER" id="PTHR12652:SF50">
    <property type="entry name" value="PEROXIN 11"/>
    <property type="match status" value="1"/>
</dbReference>
<dbReference type="PANTHER" id="PTHR12652">
    <property type="entry name" value="PEROXISOMAL BIOGENESIS FACTOR 11"/>
    <property type="match status" value="1"/>
</dbReference>
<dbReference type="Pfam" id="PF05648">
    <property type="entry name" value="PEX11"/>
    <property type="match status" value="1"/>
</dbReference>
<comment type="function">
    <text evidence="1 2 5">Involved in peroxisomal proliferation. Promotes peroxisome division and biogenesis.</text>
</comment>
<comment type="subunit">
    <text evidence="1 2 5">Homooligomer. Interacts with PEX34.</text>
</comment>
<comment type="subcellular location">
    <subcellularLocation>
        <location evidence="2 3">Peroxisome membrane</location>
        <topology evidence="2 3">Peripheral membrane protein</topology>
    </subcellularLocation>
</comment>
<comment type="miscellaneous">
    <text evidence="4">Present with 1630 molecules/cell in log phase SD medium.</text>
</comment>
<comment type="similarity">
    <text evidence="8">Belongs to the peroxin-11 family.</text>
</comment>
<reference key="1">
    <citation type="journal article" date="1995" name="J. Cell Biol.">
        <title>Giant peroxisomes in oleic acid-induced Saccharomyces cerevisiae lacking the peroxisomal membrane protein Pmp27p.</title>
        <authorList>
            <person name="Erdmann R."/>
            <person name="Blobel G."/>
        </authorList>
    </citation>
    <scope>NUCLEOTIDE SEQUENCE [GENOMIC DNA]</scope>
    <scope>PROTEIN SEQUENCE OF 2-28</scope>
    <source>
        <strain>ATCC 204508 / S288c</strain>
    </source>
</reference>
<reference key="2">
    <citation type="journal article" date="1995" name="J. Cell Biol.">
        <title>Pmp27 promotes peroxisomal proliferation.</title>
        <authorList>
            <person name="Marshall P.A."/>
            <person name="Krimkevich Y.I."/>
            <person name="Lark R.H."/>
            <person name="Dyer J.M."/>
            <person name="Veenhuis M."/>
            <person name="Goodman J.M."/>
        </authorList>
    </citation>
    <scope>NUCLEOTIDE SEQUENCE [GENOMIC DNA]</scope>
    <scope>PROTEIN SEQUENCE OF 2-30 AND 192-207</scope>
    <source>
        <strain>S288c / GRF88</strain>
    </source>
</reference>
<reference key="3">
    <citation type="journal article" date="1995" name="Yeast">
        <title>DNA sequence analysis of a 13 kbp fragment of the left arm of yeast chromosome XV containing seven new open reading frames.</title>
        <authorList>
            <person name="Casamayor A."/>
            <person name="Aldea M."/>
            <person name="Casas C."/>
            <person name="Herrero E."/>
            <person name="Gamo F.-J."/>
            <person name="Lafuente M.J."/>
            <person name="Gancedo C."/>
            <person name="Arino J."/>
        </authorList>
    </citation>
    <scope>NUCLEOTIDE SEQUENCE [GENOMIC DNA]</scope>
    <source>
        <strain>ATCC 96604 / S288c / FY1679</strain>
    </source>
</reference>
<reference key="4">
    <citation type="journal article" date="1997" name="Nature">
        <title>The nucleotide sequence of Saccharomyces cerevisiae chromosome XV.</title>
        <authorList>
            <person name="Dujon B."/>
            <person name="Albermann K."/>
            <person name="Aldea M."/>
            <person name="Alexandraki D."/>
            <person name="Ansorge W."/>
            <person name="Arino J."/>
            <person name="Benes V."/>
            <person name="Bohn C."/>
            <person name="Bolotin-Fukuhara M."/>
            <person name="Bordonne R."/>
            <person name="Boyer J."/>
            <person name="Camasses A."/>
            <person name="Casamayor A."/>
            <person name="Casas C."/>
            <person name="Cheret G."/>
            <person name="Cziepluch C."/>
            <person name="Daignan-Fornier B."/>
            <person name="Dang V.-D."/>
            <person name="de Haan M."/>
            <person name="Delius H."/>
            <person name="Durand P."/>
            <person name="Fairhead C."/>
            <person name="Feldmann H."/>
            <person name="Gaillon L."/>
            <person name="Galisson F."/>
            <person name="Gamo F.-J."/>
            <person name="Gancedo C."/>
            <person name="Goffeau A."/>
            <person name="Goulding S.E."/>
            <person name="Grivell L.A."/>
            <person name="Habbig B."/>
            <person name="Hand N.J."/>
            <person name="Hani J."/>
            <person name="Hattenhorst U."/>
            <person name="Hebling U."/>
            <person name="Hernando Y."/>
            <person name="Herrero E."/>
            <person name="Heumann K."/>
            <person name="Hiesel R."/>
            <person name="Hilger F."/>
            <person name="Hofmann B."/>
            <person name="Hollenberg C.P."/>
            <person name="Hughes B."/>
            <person name="Jauniaux J.-C."/>
            <person name="Kalogeropoulos A."/>
            <person name="Katsoulou C."/>
            <person name="Kordes E."/>
            <person name="Lafuente M.J."/>
            <person name="Landt O."/>
            <person name="Louis E.J."/>
            <person name="Maarse A.C."/>
            <person name="Madania A."/>
            <person name="Mannhaupt G."/>
            <person name="Marck C."/>
            <person name="Martin R.P."/>
            <person name="Mewes H.-W."/>
            <person name="Michaux G."/>
            <person name="Paces V."/>
            <person name="Parle-McDermott A.G."/>
            <person name="Pearson B.M."/>
            <person name="Perrin A."/>
            <person name="Pettersson B."/>
            <person name="Poch O."/>
            <person name="Pohl T.M."/>
            <person name="Poirey R."/>
            <person name="Portetelle D."/>
            <person name="Pujol A."/>
            <person name="Purnelle B."/>
            <person name="Ramezani Rad M."/>
            <person name="Rechmann S."/>
            <person name="Schwager C."/>
            <person name="Schweizer M."/>
            <person name="Sor F."/>
            <person name="Sterky F."/>
            <person name="Tarassov I.A."/>
            <person name="Teodoru C."/>
            <person name="Tettelin H."/>
            <person name="Thierry A."/>
            <person name="Tobiasch E."/>
            <person name="Tzermia M."/>
            <person name="Uhlen M."/>
            <person name="Unseld M."/>
            <person name="Valens M."/>
            <person name="Vandenbol M."/>
            <person name="Vetter I."/>
            <person name="Vlcek C."/>
            <person name="Voet M."/>
            <person name="Volckaert G."/>
            <person name="Voss H."/>
            <person name="Wambutt R."/>
            <person name="Wedler H."/>
            <person name="Wiemann S."/>
            <person name="Winsor B."/>
            <person name="Wolfe K.H."/>
            <person name="Zollner A."/>
            <person name="Zumstein E."/>
            <person name="Kleine K."/>
        </authorList>
    </citation>
    <scope>NUCLEOTIDE SEQUENCE [LARGE SCALE GENOMIC DNA]</scope>
    <source>
        <strain>ATCC 204508 / S288c</strain>
    </source>
</reference>
<reference key="5">
    <citation type="journal article" date="2011" name="Mol. Biol. Cell">
        <title>The peroxin Pex34p functions with the Pex11 family of peroxisomal divisional proteins to regulate the peroxisome population in yeast.</title>
        <authorList>
            <person name="Tower R.J."/>
            <person name="Fagarasanu A."/>
            <person name="Aitchison J.D."/>
            <person name="Rachubinski R.A."/>
        </authorList>
    </citation>
    <scope>FUNCTION</scope>
    <scope>INTERACTION WITH PEX34</scope>
</reference>
<reference key="6">
    <citation type="journal article" date="2014" name="G3 (Bethesda)">
        <title>The reference genome sequence of Saccharomyces cerevisiae: Then and now.</title>
        <authorList>
            <person name="Engel S.R."/>
            <person name="Dietrich F.S."/>
            <person name="Fisk D.G."/>
            <person name="Binkley G."/>
            <person name="Balakrishnan R."/>
            <person name="Costanzo M.C."/>
            <person name="Dwight S.S."/>
            <person name="Hitz B.C."/>
            <person name="Karra K."/>
            <person name="Nash R.S."/>
            <person name="Weng S."/>
            <person name="Wong E.D."/>
            <person name="Lloyd P."/>
            <person name="Skrzypek M.S."/>
            <person name="Miyasato S.R."/>
            <person name="Simison M."/>
            <person name="Cherry J.M."/>
        </authorList>
    </citation>
    <scope>GENOME REANNOTATION</scope>
    <source>
        <strain>ATCC 204508 / S288c</strain>
    </source>
</reference>
<reference key="7">
    <citation type="journal article" date="2007" name="Genome Res.">
        <title>Approaching a complete repository of sequence-verified protein-encoding clones for Saccharomyces cerevisiae.</title>
        <authorList>
            <person name="Hu Y."/>
            <person name="Rolfs A."/>
            <person name="Bhullar B."/>
            <person name="Murthy T.V.S."/>
            <person name="Zhu C."/>
            <person name="Berger M.F."/>
            <person name="Camargo A.A."/>
            <person name="Kelley F."/>
            <person name="McCarron S."/>
            <person name="Jepson D."/>
            <person name="Richardson A."/>
            <person name="Raphael J."/>
            <person name="Moreira D."/>
            <person name="Taycher E."/>
            <person name="Zuo D."/>
            <person name="Mohr S."/>
            <person name="Kane M.F."/>
            <person name="Williamson J."/>
            <person name="Simpson A.J.G."/>
            <person name="Bulyk M.L."/>
            <person name="Harlow E."/>
            <person name="Marsischky G."/>
            <person name="Kolodner R.D."/>
            <person name="LaBaer J."/>
        </authorList>
    </citation>
    <scope>NUCLEOTIDE SEQUENCE [GENOMIC DNA]</scope>
    <source>
        <strain>ATCC 204508 / S288c</strain>
    </source>
</reference>
<reference key="8">
    <citation type="journal article" date="2003" name="Mol. Biol. Cell">
        <title>Pex11-related proteins in peroxisome dynamics: a role for the novel peroxin Pex27p in controlling peroxisome size and number in Saccharomyces cerevisiae.</title>
        <authorList>
            <person name="Tam Y.Y.C."/>
            <person name="Torres-Guzman J.C."/>
            <person name="Vizeacoumar F.J."/>
            <person name="Smith J.J."/>
            <person name="Marelli M."/>
            <person name="Aitchison J.D."/>
            <person name="Rachubinski R.A."/>
        </authorList>
    </citation>
    <scope>FUNCTION</scope>
    <scope>SUBUNIT</scope>
</reference>
<reference key="9">
    <citation type="journal article" date="2003" name="Mol. Biol. Cell">
        <title>Conserved function of pex11p and the novel pex25p and pex27p in peroxisome biogenesis.</title>
        <authorList>
            <person name="Rottensteiner H."/>
            <person name="Stein K."/>
            <person name="Sonnenhol E."/>
            <person name="Erdmann R."/>
        </authorList>
    </citation>
    <scope>FUNCTION</scope>
    <scope>SUBUNIT</scope>
    <scope>SUBCELLULAR LOCATION</scope>
    <source>
        <strain>ATCC 201389 / BY4742</strain>
    </source>
</reference>
<reference key="10">
    <citation type="journal article" date="2003" name="Nature">
        <title>Global analysis of protein localization in budding yeast.</title>
        <authorList>
            <person name="Huh W.-K."/>
            <person name="Falvo J.V."/>
            <person name="Gerke L.C."/>
            <person name="Carroll A.S."/>
            <person name="Howson R.W."/>
            <person name="Weissman J.S."/>
            <person name="O'Shea E.K."/>
        </authorList>
    </citation>
    <scope>SUBCELLULAR LOCATION [LARGE SCALE ANALYSIS]</scope>
</reference>
<reference key="11">
    <citation type="journal article" date="2003" name="Nature">
        <title>Global analysis of protein expression in yeast.</title>
        <authorList>
            <person name="Ghaemmaghami S."/>
            <person name="Huh W.-K."/>
            <person name="Bower K."/>
            <person name="Howson R.W."/>
            <person name="Belle A."/>
            <person name="Dephoure N."/>
            <person name="O'Shea E.K."/>
            <person name="Weissman J.S."/>
        </authorList>
    </citation>
    <scope>LEVEL OF PROTEIN EXPRESSION [LARGE SCALE ANALYSIS]</scope>
</reference>
<reference key="12">
    <citation type="journal article" date="2012" name="Proc. Natl. Acad. Sci. U.S.A.">
        <title>N-terminal acetylome analyses and functional insights of the N-terminal acetyltransferase NatB.</title>
        <authorList>
            <person name="Van Damme P."/>
            <person name="Lasa M."/>
            <person name="Polevoda B."/>
            <person name="Gazquez C."/>
            <person name="Elosegui-Artola A."/>
            <person name="Kim D.S."/>
            <person name="De Juan-Pardo E."/>
            <person name="Demeyer K."/>
            <person name="Hole K."/>
            <person name="Larrea E."/>
            <person name="Timmerman E."/>
            <person name="Prieto J."/>
            <person name="Arnesen T."/>
            <person name="Sherman F."/>
            <person name="Gevaert K."/>
            <person name="Aldabe R."/>
        </authorList>
    </citation>
    <scope>IDENTIFICATION BY MASS SPECTROMETRY [LARGE SCALE ANALYSIS]</scope>
</reference>